<gene>
    <name evidence="1" type="primary">def</name>
    <name type="ordered locus">YE3889</name>
</gene>
<dbReference type="EC" id="3.5.1.88" evidence="1"/>
<dbReference type="EMBL" id="AM286415">
    <property type="protein sequence ID" value="CAL13908.1"/>
    <property type="molecule type" value="Genomic_DNA"/>
</dbReference>
<dbReference type="RefSeq" id="WP_004709217.1">
    <property type="nucleotide sequence ID" value="NC_008800.1"/>
</dbReference>
<dbReference type="RefSeq" id="YP_001008034.1">
    <property type="nucleotide sequence ID" value="NC_008800.1"/>
</dbReference>
<dbReference type="SMR" id="A1JRZ1"/>
<dbReference type="GeneID" id="93971475"/>
<dbReference type="KEGG" id="yen:YE3889"/>
<dbReference type="PATRIC" id="fig|393305.7.peg.4138"/>
<dbReference type="eggNOG" id="COG0242">
    <property type="taxonomic scope" value="Bacteria"/>
</dbReference>
<dbReference type="HOGENOM" id="CLU_061901_2_1_6"/>
<dbReference type="OrthoDB" id="9804313at2"/>
<dbReference type="Proteomes" id="UP000000642">
    <property type="component" value="Chromosome"/>
</dbReference>
<dbReference type="GO" id="GO:0046872">
    <property type="term" value="F:metal ion binding"/>
    <property type="evidence" value="ECO:0007669"/>
    <property type="project" value="UniProtKB-KW"/>
</dbReference>
<dbReference type="GO" id="GO:0042586">
    <property type="term" value="F:peptide deformylase activity"/>
    <property type="evidence" value="ECO:0007669"/>
    <property type="project" value="UniProtKB-UniRule"/>
</dbReference>
<dbReference type="GO" id="GO:0043686">
    <property type="term" value="P:co-translational protein modification"/>
    <property type="evidence" value="ECO:0007669"/>
    <property type="project" value="TreeGrafter"/>
</dbReference>
<dbReference type="GO" id="GO:0006412">
    <property type="term" value="P:translation"/>
    <property type="evidence" value="ECO:0007669"/>
    <property type="project" value="UniProtKB-UniRule"/>
</dbReference>
<dbReference type="CDD" id="cd00487">
    <property type="entry name" value="Pep_deformylase"/>
    <property type="match status" value="1"/>
</dbReference>
<dbReference type="FunFam" id="3.90.45.10:FF:000001">
    <property type="entry name" value="Peptide deformylase"/>
    <property type="match status" value="1"/>
</dbReference>
<dbReference type="Gene3D" id="3.90.45.10">
    <property type="entry name" value="Peptide deformylase"/>
    <property type="match status" value="1"/>
</dbReference>
<dbReference type="HAMAP" id="MF_00163">
    <property type="entry name" value="Pep_deformylase"/>
    <property type="match status" value="1"/>
</dbReference>
<dbReference type="InterPro" id="IPR023635">
    <property type="entry name" value="Peptide_deformylase"/>
</dbReference>
<dbReference type="InterPro" id="IPR036821">
    <property type="entry name" value="Peptide_deformylase_sf"/>
</dbReference>
<dbReference type="NCBIfam" id="TIGR00079">
    <property type="entry name" value="pept_deformyl"/>
    <property type="match status" value="1"/>
</dbReference>
<dbReference type="NCBIfam" id="NF001159">
    <property type="entry name" value="PRK00150.1-3"/>
    <property type="match status" value="1"/>
</dbReference>
<dbReference type="PANTHER" id="PTHR10458">
    <property type="entry name" value="PEPTIDE DEFORMYLASE"/>
    <property type="match status" value="1"/>
</dbReference>
<dbReference type="PANTHER" id="PTHR10458:SF21">
    <property type="entry name" value="PEPTIDE DEFORMYLASE"/>
    <property type="match status" value="1"/>
</dbReference>
<dbReference type="Pfam" id="PF01327">
    <property type="entry name" value="Pep_deformylase"/>
    <property type="match status" value="1"/>
</dbReference>
<dbReference type="PIRSF" id="PIRSF004749">
    <property type="entry name" value="Pep_def"/>
    <property type="match status" value="1"/>
</dbReference>
<dbReference type="PRINTS" id="PR01576">
    <property type="entry name" value="PDEFORMYLASE"/>
</dbReference>
<dbReference type="SUPFAM" id="SSF56420">
    <property type="entry name" value="Peptide deformylase"/>
    <property type="match status" value="1"/>
</dbReference>
<sequence length="170" mass="19376">MSVLQVLHYPDERLRKIAAPVKEVNGEIQRIVDDMFETMYAEEGIGLAATQVDVHLQIIVIDVSENRDQRLVLINPELLEKSGETGIEEGCLSIPEQRALVPRAEKVKIRALDRDGKPFELEADDLLAICIQHEMDHLVGKLFVDYLSPLKRQRIRQKLEKMAKLNARAN</sequence>
<keyword id="KW-0378">Hydrolase</keyword>
<keyword id="KW-0408">Iron</keyword>
<keyword id="KW-0479">Metal-binding</keyword>
<keyword id="KW-0648">Protein biosynthesis</keyword>
<proteinExistence type="inferred from homology"/>
<name>DEF_YERE8</name>
<organism>
    <name type="scientific">Yersinia enterocolitica serotype O:8 / biotype 1B (strain NCTC 13174 / 8081)</name>
    <dbReference type="NCBI Taxonomy" id="393305"/>
    <lineage>
        <taxon>Bacteria</taxon>
        <taxon>Pseudomonadati</taxon>
        <taxon>Pseudomonadota</taxon>
        <taxon>Gammaproteobacteria</taxon>
        <taxon>Enterobacterales</taxon>
        <taxon>Yersiniaceae</taxon>
        <taxon>Yersinia</taxon>
    </lineage>
</organism>
<feature type="chain" id="PRO_0000301126" description="Peptide deformylase">
    <location>
        <begin position="1"/>
        <end position="170"/>
    </location>
</feature>
<feature type="active site" evidence="1">
    <location>
        <position position="134"/>
    </location>
</feature>
<feature type="binding site" evidence="1">
    <location>
        <position position="91"/>
    </location>
    <ligand>
        <name>Fe cation</name>
        <dbReference type="ChEBI" id="CHEBI:24875"/>
    </ligand>
</feature>
<feature type="binding site" evidence="1">
    <location>
        <position position="133"/>
    </location>
    <ligand>
        <name>Fe cation</name>
        <dbReference type="ChEBI" id="CHEBI:24875"/>
    </ligand>
</feature>
<feature type="binding site" evidence="1">
    <location>
        <position position="137"/>
    </location>
    <ligand>
        <name>Fe cation</name>
        <dbReference type="ChEBI" id="CHEBI:24875"/>
    </ligand>
</feature>
<accession>A1JRZ1</accession>
<evidence type="ECO:0000255" key="1">
    <source>
        <dbReference type="HAMAP-Rule" id="MF_00163"/>
    </source>
</evidence>
<comment type="function">
    <text evidence="1">Removes the formyl group from the N-terminal Met of newly synthesized proteins. Requires at least a dipeptide for an efficient rate of reaction. N-terminal L-methionine is a prerequisite for activity but the enzyme has broad specificity at other positions.</text>
</comment>
<comment type="catalytic activity">
    <reaction evidence="1">
        <text>N-terminal N-formyl-L-methionyl-[peptide] + H2O = N-terminal L-methionyl-[peptide] + formate</text>
        <dbReference type="Rhea" id="RHEA:24420"/>
        <dbReference type="Rhea" id="RHEA-COMP:10639"/>
        <dbReference type="Rhea" id="RHEA-COMP:10640"/>
        <dbReference type="ChEBI" id="CHEBI:15377"/>
        <dbReference type="ChEBI" id="CHEBI:15740"/>
        <dbReference type="ChEBI" id="CHEBI:49298"/>
        <dbReference type="ChEBI" id="CHEBI:64731"/>
        <dbReference type="EC" id="3.5.1.88"/>
    </reaction>
</comment>
<comment type="cofactor">
    <cofactor evidence="1">
        <name>Fe(2+)</name>
        <dbReference type="ChEBI" id="CHEBI:29033"/>
    </cofactor>
    <text evidence="1">Binds 1 Fe(2+) ion.</text>
</comment>
<comment type="similarity">
    <text evidence="1">Belongs to the polypeptide deformylase family.</text>
</comment>
<protein>
    <recommendedName>
        <fullName evidence="1">Peptide deformylase</fullName>
        <shortName evidence="1">PDF</shortName>
        <ecNumber evidence="1">3.5.1.88</ecNumber>
    </recommendedName>
    <alternativeName>
        <fullName evidence="1">Polypeptide deformylase</fullName>
    </alternativeName>
</protein>
<reference key="1">
    <citation type="journal article" date="2006" name="PLoS Genet.">
        <title>The complete genome sequence and comparative genome analysis of the high pathogenicity Yersinia enterocolitica strain 8081.</title>
        <authorList>
            <person name="Thomson N.R."/>
            <person name="Howard S."/>
            <person name="Wren B.W."/>
            <person name="Holden M.T.G."/>
            <person name="Crossman L."/>
            <person name="Challis G.L."/>
            <person name="Churcher C."/>
            <person name="Mungall K."/>
            <person name="Brooks K."/>
            <person name="Chillingworth T."/>
            <person name="Feltwell T."/>
            <person name="Abdellah Z."/>
            <person name="Hauser H."/>
            <person name="Jagels K."/>
            <person name="Maddison M."/>
            <person name="Moule S."/>
            <person name="Sanders M."/>
            <person name="Whitehead S."/>
            <person name="Quail M.A."/>
            <person name="Dougan G."/>
            <person name="Parkhill J."/>
            <person name="Prentice M.B."/>
        </authorList>
    </citation>
    <scope>NUCLEOTIDE SEQUENCE [LARGE SCALE GENOMIC DNA]</scope>
    <source>
        <strain>NCTC 13174 / 8081</strain>
    </source>
</reference>